<protein>
    <recommendedName>
        <fullName evidence="1">Large ribosomal subunit protein uL4</fullName>
    </recommendedName>
    <alternativeName>
        <fullName evidence="3">50S ribosomal protein L4</fullName>
    </alternativeName>
</protein>
<gene>
    <name evidence="1" type="primary">rplD</name>
    <name evidence="1" type="synonym">rpl4</name>
    <name type="ordered locus">SynWH7803_0433</name>
</gene>
<name>RL4_SYNPW</name>
<proteinExistence type="inferred from homology"/>
<comment type="function">
    <text evidence="1">One of the primary rRNA binding proteins, this protein initially binds near the 5'-end of the 23S rRNA. It is important during the early stages of 50S assembly. It makes multiple contacts with different domains of the 23S rRNA in the assembled 50S subunit and ribosome.</text>
</comment>
<comment type="function">
    <text evidence="1">Forms part of the polypeptide exit tunnel.</text>
</comment>
<comment type="subunit">
    <text evidence="1">Part of the 50S ribosomal subunit.</text>
</comment>
<comment type="similarity">
    <text evidence="1">Belongs to the universal ribosomal protein uL4 family.</text>
</comment>
<organism>
    <name type="scientific">Synechococcus sp. (strain WH7803)</name>
    <dbReference type="NCBI Taxonomy" id="32051"/>
    <lineage>
        <taxon>Bacteria</taxon>
        <taxon>Bacillati</taxon>
        <taxon>Cyanobacteriota</taxon>
        <taxon>Cyanophyceae</taxon>
        <taxon>Synechococcales</taxon>
        <taxon>Synechococcaceae</taxon>
        <taxon>Synechococcus</taxon>
    </lineage>
</organism>
<keyword id="KW-1185">Reference proteome</keyword>
<keyword id="KW-0687">Ribonucleoprotein</keyword>
<keyword id="KW-0689">Ribosomal protein</keyword>
<keyword id="KW-0694">RNA-binding</keyword>
<keyword id="KW-0699">rRNA-binding</keyword>
<sequence>MANCVVRDWQGKETGKASLDLKVAKETTALDLMHRAVLRQQAHTRQGTASTLTRSEVRGGGRKPYKQKGTGRARQGSIRTPLRPGGGIVFGPKPRSYNLAMNRKERRLALRTALMARIDDVTVVKDFGTSLEAPKTREIVDALGRLGIEADSKVLIVLGTPSEVLRRSVRNLEKVKLIAANQLNVFDLLHANALVLGEEALATIQEVYGDD</sequence>
<accession>A5GIU4</accession>
<evidence type="ECO:0000255" key="1">
    <source>
        <dbReference type="HAMAP-Rule" id="MF_01328"/>
    </source>
</evidence>
<evidence type="ECO:0000256" key="2">
    <source>
        <dbReference type="SAM" id="MobiDB-lite"/>
    </source>
</evidence>
<evidence type="ECO:0000305" key="3"/>
<reference key="1">
    <citation type="submission" date="2006-05" db="EMBL/GenBank/DDBJ databases">
        <authorList>
            <consortium name="Genoscope"/>
        </authorList>
    </citation>
    <scope>NUCLEOTIDE SEQUENCE [LARGE SCALE GENOMIC DNA]</scope>
    <source>
        <strain>WH7803</strain>
    </source>
</reference>
<feature type="chain" id="PRO_1000052518" description="Large ribosomal subunit protein uL4">
    <location>
        <begin position="1"/>
        <end position="211"/>
    </location>
</feature>
<feature type="region of interest" description="Disordered" evidence="2">
    <location>
        <begin position="40"/>
        <end position="87"/>
    </location>
</feature>
<feature type="compositionally biased region" description="Polar residues" evidence="2">
    <location>
        <begin position="41"/>
        <end position="54"/>
    </location>
</feature>
<feature type="compositionally biased region" description="Basic residues" evidence="2">
    <location>
        <begin position="60"/>
        <end position="71"/>
    </location>
</feature>
<dbReference type="EMBL" id="CT971583">
    <property type="protein sequence ID" value="CAK22859.1"/>
    <property type="molecule type" value="Genomic_DNA"/>
</dbReference>
<dbReference type="SMR" id="A5GIU4"/>
<dbReference type="STRING" id="32051.SynWH7803_0433"/>
<dbReference type="KEGG" id="syx:SynWH7803_0433"/>
<dbReference type="eggNOG" id="COG0088">
    <property type="taxonomic scope" value="Bacteria"/>
</dbReference>
<dbReference type="HOGENOM" id="CLU_041575_5_2_3"/>
<dbReference type="OrthoDB" id="9803201at2"/>
<dbReference type="Proteomes" id="UP000001566">
    <property type="component" value="Chromosome"/>
</dbReference>
<dbReference type="GO" id="GO:1990904">
    <property type="term" value="C:ribonucleoprotein complex"/>
    <property type="evidence" value="ECO:0007669"/>
    <property type="project" value="UniProtKB-KW"/>
</dbReference>
<dbReference type="GO" id="GO:0005840">
    <property type="term" value="C:ribosome"/>
    <property type="evidence" value="ECO:0007669"/>
    <property type="project" value="UniProtKB-KW"/>
</dbReference>
<dbReference type="GO" id="GO:0019843">
    <property type="term" value="F:rRNA binding"/>
    <property type="evidence" value="ECO:0007669"/>
    <property type="project" value="UniProtKB-UniRule"/>
</dbReference>
<dbReference type="GO" id="GO:0003735">
    <property type="term" value="F:structural constituent of ribosome"/>
    <property type="evidence" value="ECO:0007669"/>
    <property type="project" value="InterPro"/>
</dbReference>
<dbReference type="GO" id="GO:0006412">
    <property type="term" value="P:translation"/>
    <property type="evidence" value="ECO:0007669"/>
    <property type="project" value="UniProtKB-UniRule"/>
</dbReference>
<dbReference type="Gene3D" id="3.40.1370.10">
    <property type="match status" value="1"/>
</dbReference>
<dbReference type="HAMAP" id="MF_01328_B">
    <property type="entry name" value="Ribosomal_uL4_B"/>
    <property type="match status" value="1"/>
</dbReference>
<dbReference type="InterPro" id="IPR002136">
    <property type="entry name" value="Ribosomal_uL4"/>
</dbReference>
<dbReference type="InterPro" id="IPR013005">
    <property type="entry name" value="Ribosomal_uL4-like"/>
</dbReference>
<dbReference type="InterPro" id="IPR023574">
    <property type="entry name" value="Ribosomal_uL4_dom_sf"/>
</dbReference>
<dbReference type="NCBIfam" id="TIGR03953">
    <property type="entry name" value="rplD_bact"/>
    <property type="match status" value="1"/>
</dbReference>
<dbReference type="PANTHER" id="PTHR10746">
    <property type="entry name" value="50S RIBOSOMAL PROTEIN L4"/>
    <property type="match status" value="1"/>
</dbReference>
<dbReference type="PANTHER" id="PTHR10746:SF17">
    <property type="entry name" value="LARGE RIBOSOMAL SUBUNIT PROTEIN UL4C"/>
    <property type="match status" value="1"/>
</dbReference>
<dbReference type="Pfam" id="PF00573">
    <property type="entry name" value="Ribosomal_L4"/>
    <property type="match status" value="1"/>
</dbReference>
<dbReference type="SUPFAM" id="SSF52166">
    <property type="entry name" value="Ribosomal protein L4"/>
    <property type="match status" value="1"/>
</dbReference>